<evidence type="ECO:0000255" key="1">
    <source>
        <dbReference type="HAMAP-Rule" id="MF_01369"/>
    </source>
</evidence>
<evidence type="ECO:0000305" key="2"/>
<keyword id="KW-1185">Reference proteome</keyword>
<keyword id="KW-0687">Ribonucleoprotein</keyword>
<keyword id="KW-0689">Ribosomal protein</keyword>
<keyword id="KW-0694">RNA-binding</keyword>
<keyword id="KW-0699">rRNA-binding</keyword>
<name>RL23_BURPS</name>
<sequence length="104" mass="11740">MSEIRKNDHRLMQVLLAPVISEKATLVADKNEQVVFEVAPDATKQEVKAAVELLFKVEVDSVNVLVQKGKQKRFGRSMGRRKDVKKAYVCLKPGQEINFEAEAK</sequence>
<proteinExistence type="inferred from homology"/>
<protein>
    <recommendedName>
        <fullName evidence="1">Large ribosomal subunit protein uL23</fullName>
    </recommendedName>
    <alternativeName>
        <fullName evidence="2">50S ribosomal protein L23</fullName>
    </alternativeName>
</protein>
<accession>Q63Q13</accession>
<feature type="chain" id="PRO_0000272722" description="Large ribosomal subunit protein uL23">
    <location>
        <begin position="1"/>
        <end position="104"/>
    </location>
</feature>
<gene>
    <name evidence="1" type="primary">rplW</name>
    <name type="ordered locus">BPSL3211</name>
</gene>
<reference key="1">
    <citation type="journal article" date="2004" name="Proc. Natl. Acad. Sci. U.S.A.">
        <title>Genomic plasticity of the causative agent of melioidosis, Burkholderia pseudomallei.</title>
        <authorList>
            <person name="Holden M.T.G."/>
            <person name="Titball R.W."/>
            <person name="Peacock S.J."/>
            <person name="Cerdeno-Tarraga A.-M."/>
            <person name="Atkins T."/>
            <person name="Crossman L.C."/>
            <person name="Pitt T."/>
            <person name="Churcher C."/>
            <person name="Mungall K.L."/>
            <person name="Bentley S.D."/>
            <person name="Sebaihia M."/>
            <person name="Thomson N.R."/>
            <person name="Bason N."/>
            <person name="Beacham I.R."/>
            <person name="Brooks K."/>
            <person name="Brown K.A."/>
            <person name="Brown N.F."/>
            <person name="Challis G.L."/>
            <person name="Cherevach I."/>
            <person name="Chillingworth T."/>
            <person name="Cronin A."/>
            <person name="Crossett B."/>
            <person name="Davis P."/>
            <person name="DeShazer D."/>
            <person name="Feltwell T."/>
            <person name="Fraser A."/>
            <person name="Hance Z."/>
            <person name="Hauser H."/>
            <person name="Holroyd S."/>
            <person name="Jagels K."/>
            <person name="Keith K.E."/>
            <person name="Maddison M."/>
            <person name="Moule S."/>
            <person name="Price C."/>
            <person name="Quail M.A."/>
            <person name="Rabbinowitsch E."/>
            <person name="Rutherford K."/>
            <person name="Sanders M."/>
            <person name="Simmonds M."/>
            <person name="Songsivilai S."/>
            <person name="Stevens K."/>
            <person name="Tumapa S."/>
            <person name="Vesaratchavest M."/>
            <person name="Whitehead S."/>
            <person name="Yeats C."/>
            <person name="Barrell B.G."/>
            <person name="Oyston P.C.F."/>
            <person name="Parkhill J."/>
        </authorList>
    </citation>
    <scope>NUCLEOTIDE SEQUENCE [LARGE SCALE GENOMIC DNA]</scope>
    <source>
        <strain>K96243</strain>
    </source>
</reference>
<dbReference type="EMBL" id="BX571965">
    <property type="protein sequence ID" value="CAH37222.1"/>
    <property type="molecule type" value="Genomic_DNA"/>
</dbReference>
<dbReference type="RefSeq" id="WP_004199275.1">
    <property type="nucleotide sequence ID" value="NZ_CP009538.1"/>
</dbReference>
<dbReference type="RefSeq" id="YP_109805.1">
    <property type="nucleotide sequence ID" value="NC_006350.1"/>
</dbReference>
<dbReference type="SMR" id="Q63Q13"/>
<dbReference type="STRING" id="272560.BPSL3211"/>
<dbReference type="GeneID" id="98107158"/>
<dbReference type="KEGG" id="bps:BPSL3211"/>
<dbReference type="PATRIC" id="fig|272560.51.peg.2027"/>
<dbReference type="eggNOG" id="COG0089">
    <property type="taxonomic scope" value="Bacteria"/>
</dbReference>
<dbReference type="PRO" id="PR:Q63Q13"/>
<dbReference type="Proteomes" id="UP000000605">
    <property type="component" value="Chromosome 1"/>
</dbReference>
<dbReference type="GO" id="GO:1990904">
    <property type="term" value="C:ribonucleoprotein complex"/>
    <property type="evidence" value="ECO:0007669"/>
    <property type="project" value="UniProtKB-KW"/>
</dbReference>
<dbReference type="GO" id="GO:0005840">
    <property type="term" value="C:ribosome"/>
    <property type="evidence" value="ECO:0007669"/>
    <property type="project" value="UniProtKB-KW"/>
</dbReference>
<dbReference type="GO" id="GO:0019843">
    <property type="term" value="F:rRNA binding"/>
    <property type="evidence" value="ECO:0007669"/>
    <property type="project" value="UniProtKB-UniRule"/>
</dbReference>
<dbReference type="GO" id="GO:0003735">
    <property type="term" value="F:structural constituent of ribosome"/>
    <property type="evidence" value="ECO:0007669"/>
    <property type="project" value="InterPro"/>
</dbReference>
<dbReference type="GO" id="GO:0006412">
    <property type="term" value="P:translation"/>
    <property type="evidence" value="ECO:0007669"/>
    <property type="project" value="UniProtKB-UniRule"/>
</dbReference>
<dbReference type="FunFam" id="3.30.70.330:FF:000001">
    <property type="entry name" value="50S ribosomal protein L23"/>
    <property type="match status" value="1"/>
</dbReference>
<dbReference type="Gene3D" id="3.30.70.330">
    <property type="match status" value="1"/>
</dbReference>
<dbReference type="HAMAP" id="MF_01369_B">
    <property type="entry name" value="Ribosomal_uL23_B"/>
    <property type="match status" value="1"/>
</dbReference>
<dbReference type="InterPro" id="IPR012677">
    <property type="entry name" value="Nucleotide-bd_a/b_plait_sf"/>
</dbReference>
<dbReference type="InterPro" id="IPR013025">
    <property type="entry name" value="Ribosomal_uL23-like"/>
</dbReference>
<dbReference type="InterPro" id="IPR012678">
    <property type="entry name" value="Ribosomal_uL23/eL15/eS24_sf"/>
</dbReference>
<dbReference type="NCBIfam" id="NF004359">
    <property type="entry name" value="PRK05738.1-3"/>
    <property type="match status" value="1"/>
</dbReference>
<dbReference type="NCBIfam" id="NF004363">
    <property type="entry name" value="PRK05738.2-4"/>
    <property type="match status" value="1"/>
</dbReference>
<dbReference type="PANTHER" id="PTHR11620">
    <property type="entry name" value="60S RIBOSOMAL PROTEIN L23A"/>
    <property type="match status" value="1"/>
</dbReference>
<dbReference type="Pfam" id="PF00276">
    <property type="entry name" value="Ribosomal_L23"/>
    <property type="match status" value="1"/>
</dbReference>
<dbReference type="SUPFAM" id="SSF54189">
    <property type="entry name" value="Ribosomal proteins S24e, L23 and L15e"/>
    <property type="match status" value="1"/>
</dbReference>
<comment type="function">
    <text evidence="1">One of the early assembly proteins it binds 23S rRNA. One of the proteins that surrounds the polypeptide exit tunnel on the outside of the ribosome. Forms the main docking site for trigger factor binding to the ribosome.</text>
</comment>
<comment type="subunit">
    <text evidence="1">Part of the 50S ribosomal subunit. Contacts protein L29, and trigger factor when it is bound to the ribosome.</text>
</comment>
<comment type="similarity">
    <text evidence="1">Belongs to the universal ribosomal protein uL23 family.</text>
</comment>
<organism>
    <name type="scientific">Burkholderia pseudomallei (strain K96243)</name>
    <dbReference type="NCBI Taxonomy" id="272560"/>
    <lineage>
        <taxon>Bacteria</taxon>
        <taxon>Pseudomonadati</taxon>
        <taxon>Pseudomonadota</taxon>
        <taxon>Betaproteobacteria</taxon>
        <taxon>Burkholderiales</taxon>
        <taxon>Burkholderiaceae</taxon>
        <taxon>Burkholderia</taxon>
        <taxon>pseudomallei group</taxon>
    </lineage>
</organism>